<comment type="function">
    <text evidence="1">NDH-1 shuttles electrons from NADH, via FMN and iron-sulfur (Fe-S) centers, to quinones in the respiratory chain. The immediate electron acceptor for the enzyme in this species is believed to be ubiquinone. Couples the redox reaction to proton translocation (for every two electrons transferred, four hydrogen ions are translocated across the cytoplasmic membrane), and thus conserves the redox energy in a proton gradient.</text>
</comment>
<comment type="catalytic activity">
    <reaction evidence="1">
        <text>a quinone + NADH + 5 H(+)(in) = a quinol + NAD(+) + 4 H(+)(out)</text>
        <dbReference type="Rhea" id="RHEA:57888"/>
        <dbReference type="ChEBI" id="CHEBI:15378"/>
        <dbReference type="ChEBI" id="CHEBI:24646"/>
        <dbReference type="ChEBI" id="CHEBI:57540"/>
        <dbReference type="ChEBI" id="CHEBI:57945"/>
        <dbReference type="ChEBI" id="CHEBI:132124"/>
    </reaction>
</comment>
<comment type="cofactor">
    <cofactor evidence="1">
        <name>[4Fe-4S] cluster</name>
        <dbReference type="ChEBI" id="CHEBI:49883"/>
    </cofactor>
    <text evidence="1">Binds 1 [4Fe-4S] cluster.</text>
</comment>
<comment type="subunit">
    <text evidence="1">NDH-1 is composed of 14 different subunits. Subunits NuoB, C, D, E, F, and G constitute the peripheral sector of the complex.</text>
</comment>
<comment type="subcellular location">
    <subcellularLocation>
        <location evidence="1">Cell membrane</location>
        <topology evidence="1">Peripheral membrane protein</topology>
        <orientation evidence="1">Cytoplasmic side</orientation>
    </subcellularLocation>
</comment>
<comment type="similarity">
    <text evidence="1">Belongs to the complex I 20 kDa subunit family.</text>
</comment>
<keyword id="KW-0004">4Fe-4S</keyword>
<keyword id="KW-1003">Cell membrane</keyword>
<keyword id="KW-0408">Iron</keyword>
<keyword id="KW-0411">Iron-sulfur</keyword>
<keyword id="KW-0472">Membrane</keyword>
<keyword id="KW-0479">Metal-binding</keyword>
<keyword id="KW-0520">NAD</keyword>
<keyword id="KW-0874">Quinone</keyword>
<keyword id="KW-1185">Reference proteome</keyword>
<keyword id="KW-1278">Translocase</keyword>
<keyword id="KW-0813">Transport</keyword>
<keyword id="KW-0830">Ubiquinone</keyword>
<feature type="chain" id="PRO_0000376177" description="NADH-quinone oxidoreductase subunit B 1">
    <location>
        <begin position="1"/>
        <end position="264"/>
    </location>
</feature>
<feature type="binding site" evidence="1">
    <location>
        <position position="42"/>
    </location>
    <ligand>
        <name>[4Fe-4S] cluster</name>
        <dbReference type="ChEBI" id="CHEBI:49883"/>
    </ligand>
</feature>
<feature type="binding site" evidence="1">
    <location>
        <position position="43"/>
    </location>
    <ligand>
        <name>[4Fe-4S] cluster</name>
        <dbReference type="ChEBI" id="CHEBI:49883"/>
    </ligand>
</feature>
<feature type="binding site" evidence="1">
    <location>
        <position position="108"/>
    </location>
    <ligand>
        <name>[4Fe-4S] cluster</name>
        <dbReference type="ChEBI" id="CHEBI:49883"/>
    </ligand>
</feature>
<feature type="binding site" evidence="1">
    <location>
        <position position="138"/>
    </location>
    <ligand>
        <name>[4Fe-4S] cluster</name>
        <dbReference type="ChEBI" id="CHEBI:49883"/>
    </ligand>
</feature>
<gene>
    <name evidence="1" type="primary">nuoB1</name>
    <name type="ordered locus">Caur_1986</name>
</gene>
<name>NUOB1_CHLAA</name>
<proteinExistence type="inferred from homology"/>
<evidence type="ECO:0000255" key="1">
    <source>
        <dbReference type="HAMAP-Rule" id="MF_01356"/>
    </source>
</evidence>
<accession>A9WED9</accession>
<dbReference type="EC" id="7.1.1.-" evidence="1"/>
<dbReference type="EMBL" id="CP000909">
    <property type="protein sequence ID" value="ABY35201.1"/>
    <property type="molecule type" value="Genomic_DNA"/>
</dbReference>
<dbReference type="RefSeq" id="WP_012257855.1">
    <property type="nucleotide sequence ID" value="NC_010175.1"/>
</dbReference>
<dbReference type="RefSeq" id="YP_001635590.1">
    <property type="nucleotide sequence ID" value="NC_010175.1"/>
</dbReference>
<dbReference type="SMR" id="A9WED9"/>
<dbReference type="STRING" id="324602.Caur_1986"/>
<dbReference type="EnsemblBacteria" id="ABY35201">
    <property type="protein sequence ID" value="ABY35201"/>
    <property type="gene ID" value="Caur_1986"/>
</dbReference>
<dbReference type="KEGG" id="cau:Caur_1986"/>
<dbReference type="PATRIC" id="fig|324602.8.peg.2255"/>
<dbReference type="eggNOG" id="COG0377">
    <property type="taxonomic scope" value="Bacteria"/>
</dbReference>
<dbReference type="HOGENOM" id="CLU_055737_3_0_0"/>
<dbReference type="InParanoid" id="A9WED9"/>
<dbReference type="Proteomes" id="UP000002008">
    <property type="component" value="Chromosome"/>
</dbReference>
<dbReference type="GO" id="GO:0005886">
    <property type="term" value="C:plasma membrane"/>
    <property type="evidence" value="ECO:0007669"/>
    <property type="project" value="UniProtKB-SubCell"/>
</dbReference>
<dbReference type="GO" id="GO:0045271">
    <property type="term" value="C:respiratory chain complex I"/>
    <property type="evidence" value="ECO:0000318"/>
    <property type="project" value="GO_Central"/>
</dbReference>
<dbReference type="GO" id="GO:0051539">
    <property type="term" value="F:4 iron, 4 sulfur cluster binding"/>
    <property type="evidence" value="ECO:0007669"/>
    <property type="project" value="UniProtKB-KW"/>
</dbReference>
<dbReference type="GO" id="GO:0005506">
    <property type="term" value="F:iron ion binding"/>
    <property type="evidence" value="ECO:0007669"/>
    <property type="project" value="UniProtKB-UniRule"/>
</dbReference>
<dbReference type="GO" id="GO:0008137">
    <property type="term" value="F:NADH dehydrogenase (ubiquinone) activity"/>
    <property type="evidence" value="ECO:0000318"/>
    <property type="project" value="GO_Central"/>
</dbReference>
<dbReference type="GO" id="GO:0050136">
    <property type="term" value="F:NADH:ubiquinone reductase (non-electrogenic) activity"/>
    <property type="evidence" value="ECO:0007669"/>
    <property type="project" value="UniProtKB-UniRule"/>
</dbReference>
<dbReference type="GO" id="GO:0048038">
    <property type="term" value="F:quinone binding"/>
    <property type="evidence" value="ECO:0007669"/>
    <property type="project" value="UniProtKB-KW"/>
</dbReference>
<dbReference type="GO" id="GO:0009060">
    <property type="term" value="P:aerobic respiration"/>
    <property type="evidence" value="ECO:0000318"/>
    <property type="project" value="GO_Central"/>
</dbReference>
<dbReference type="GO" id="GO:0015990">
    <property type="term" value="P:electron transport coupled proton transport"/>
    <property type="evidence" value="ECO:0000318"/>
    <property type="project" value="GO_Central"/>
</dbReference>
<dbReference type="FunFam" id="3.40.50.12280:FF:000004">
    <property type="entry name" value="NADH-quinone oxidoreductase subunit B"/>
    <property type="match status" value="1"/>
</dbReference>
<dbReference type="Gene3D" id="3.40.50.12280">
    <property type="match status" value="1"/>
</dbReference>
<dbReference type="HAMAP" id="MF_01356">
    <property type="entry name" value="NDH1_NuoB"/>
    <property type="match status" value="1"/>
</dbReference>
<dbReference type="InterPro" id="IPR006137">
    <property type="entry name" value="NADH_UbQ_OxRdtase-like_20kDa"/>
</dbReference>
<dbReference type="InterPro" id="IPR006138">
    <property type="entry name" value="NADH_UQ_OxRdtase_20Kd_su"/>
</dbReference>
<dbReference type="NCBIfam" id="TIGR01957">
    <property type="entry name" value="nuoB_fam"/>
    <property type="match status" value="1"/>
</dbReference>
<dbReference type="NCBIfam" id="NF005012">
    <property type="entry name" value="PRK06411.1"/>
    <property type="match status" value="1"/>
</dbReference>
<dbReference type="NCBIfam" id="NF011394">
    <property type="entry name" value="PRK14819.1"/>
    <property type="match status" value="1"/>
</dbReference>
<dbReference type="PANTHER" id="PTHR11995">
    <property type="entry name" value="NADH DEHYDROGENASE"/>
    <property type="match status" value="1"/>
</dbReference>
<dbReference type="PANTHER" id="PTHR11995:SF33">
    <property type="entry name" value="NADH-QUINONE OXIDOREDUCTASE SUBUNIT B 2"/>
    <property type="match status" value="1"/>
</dbReference>
<dbReference type="Pfam" id="PF01058">
    <property type="entry name" value="Oxidored_q6"/>
    <property type="match status" value="1"/>
</dbReference>
<dbReference type="SUPFAM" id="SSF56770">
    <property type="entry name" value="HydA/Nqo6-like"/>
    <property type="match status" value="1"/>
</dbReference>
<protein>
    <recommendedName>
        <fullName evidence="1">NADH-quinone oxidoreductase subunit B 1</fullName>
        <ecNumber evidence="1">7.1.1.-</ecNumber>
    </recommendedName>
    <alternativeName>
        <fullName evidence="1">NADH dehydrogenase I subunit B 1</fullName>
    </alternativeName>
    <alternativeName>
        <fullName evidence="1">NDH-1 subunit B 1</fullName>
    </alternativeName>
</protein>
<sequence>MAEIDPTQLELERQGILLTTVNRFYNWGRRSSIWPMAFGLACCAIEMMAFGLSRYDVARFGAELFRASPRQADLMIVAGTVTKKMAPQVVRLYNQMAEPRYVISMGACATSGGPFRDGYNVLRGIDLLIPVDVYVPGCPPRPEALLHALMTLQEQIDRQKLGRVRWYGSGDKPQTGDFPVPTFGAKGLEIDGKLVDPVGGLPLLSPYTSPSHGEHRSGQIEHPEVVRQFPIMDPEVELENALKARGIAPEIAADDLKRSVVNDA</sequence>
<reference key="1">
    <citation type="journal article" date="2011" name="BMC Genomics">
        <title>Complete genome sequence of the filamentous anoxygenic phototrophic bacterium Chloroflexus aurantiacus.</title>
        <authorList>
            <person name="Tang K.H."/>
            <person name="Barry K."/>
            <person name="Chertkov O."/>
            <person name="Dalin E."/>
            <person name="Han C.S."/>
            <person name="Hauser L.J."/>
            <person name="Honchak B.M."/>
            <person name="Karbach L.E."/>
            <person name="Land M.L."/>
            <person name="Lapidus A."/>
            <person name="Larimer F.W."/>
            <person name="Mikhailova N."/>
            <person name="Pitluck S."/>
            <person name="Pierson B.K."/>
            <person name="Blankenship R.E."/>
        </authorList>
    </citation>
    <scope>NUCLEOTIDE SEQUENCE [LARGE SCALE GENOMIC DNA]</scope>
    <source>
        <strain>ATCC 29366 / DSM 635 / J-10-fl</strain>
    </source>
</reference>
<organism>
    <name type="scientific">Chloroflexus aurantiacus (strain ATCC 29366 / DSM 635 / J-10-fl)</name>
    <dbReference type="NCBI Taxonomy" id="324602"/>
    <lineage>
        <taxon>Bacteria</taxon>
        <taxon>Bacillati</taxon>
        <taxon>Chloroflexota</taxon>
        <taxon>Chloroflexia</taxon>
        <taxon>Chloroflexales</taxon>
        <taxon>Chloroflexineae</taxon>
        <taxon>Chloroflexaceae</taxon>
        <taxon>Chloroflexus</taxon>
    </lineage>
</organism>